<reference evidence="3" key="1">
    <citation type="journal article" date="2005" name="Nature">
        <title>Sequencing of Aspergillus nidulans and comparative analysis with A. fumigatus and A. oryzae.</title>
        <authorList>
            <person name="Galagan J.E."/>
            <person name="Calvo S.E."/>
            <person name="Cuomo C."/>
            <person name="Ma L.-J."/>
            <person name="Wortman J.R."/>
            <person name="Batzoglou S."/>
            <person name="Lee S.-I."/>
            <person name="Bastuerkmen M."/>
            <person name="Spevak C.C."/>
            <person name="Clutterbuck J."/>
            <person name="Kapitonov V."/>
            <person name="Jurka J."/>
            <person name="Scazzocchio C."/>
            <person name="Farman M.L."/>
            <person name="Butler J."/>
            <person name="Purcell S."/>
            <person name="Harris S."/>
            <person name="Braus G.H."/>
            <person name="Draht O."/>
            <person name="Busch S."/>
            <person name="D'Enfert C."/>
            <person name="Bouchier C."/>
            <person name="Goldman G.H."/>
            <person name="Bell-Pedersen D."/>
            <person name="Griffiths-Jones S."/>
            <person name="Doonan J.H."/>
            <person name="Yu J."/>
            <person name="Vienken K."/>
            <person name="Pain A."/>
            <person name="Freitag M."/>
            <person name="Selker E.U."/>
            <person name="Archer D.B."/>
            <person name="Penalva M.A."/>
            <person name="Oakley B.R."/>
            <person name="Momany M."/>
            <person name="Tanaka T."/>
            <person name="Kumagai T."/>
            <person name="Asai K."/>
            <person name="Machida M."/>
            <person name="Nierman W.C."/>
            <person name="Denning D.W."/>
            <person name="Caddick M.X."/>
            <person name="Hynes M."/>
            <person name="Paoletti M."/>
            <person name="Fischer R."/>
            <person name="Miller B.L."/>
            <person name="Dyer P.S."/>
            <person name="Sachs M.S."/>
            <person name="Osmani S.A."/>
            <person name="Birren B.W."/>
        </authorList>
    </citation>
    <scope>NUCLEOTIDE SEQUENCE [LARGE SCALE GENOMIC DNA]</scope>
    <source>
        <strain>FGSC A4 / ATCC 38163 / CBS 112.46 / NRRL 194 / M139</strain>
    </source>
</reference>
<reference key="2">
    <citation type="journal article" date="2009" name="Fungal Genet. Biol.">
        <title>The 2008 update of the Aspergillus nidulans genome annotation: a community effort.</title>
        <authorList>
            <person name="Wortman J.R."/>
            <person name="Gilsenan J.M."/>
            <person name="Joardar V."/>
            <person name="Deegan J."/>
            <person name="Clutterbuck J."/>
            <person name="Andersen M.R."/>
            <person name="Archer D."/>
            <person name="Bencina M."/>
            <person name="Braus G."/>
            <person name="Coutinho P."/>
            <person name="von Dohren H."/>
            <person name="Doonan J."/>
            <person name="Driessen A.J."/>
            <person name="Durek P."/>
            <person name="Espeso E."/>
            <person name="Fekete E."/>
            <person name="Flipphi M."/>
            <person name="Estrada C.G."/>
            <person name="Geysens S."/>
            <person name="Goldman G."/>
            <person name="de Groot P.W."/>
            <person name="Hansen K."/>
            <person name="Harris S.D."/>
            <person name="Heinekamp T."/>
            <person name="Helmstaedt K."/>
            <person name="Henrissat B."/>
            <person name="Hofmann G."/>
            <person name="Homan T."/>
            <person name="Horio T."/>
            <person name="Horiuchi H."/>
            <person name="James S."/>
            <person name="Jones M."/>
            <person name="Karaffa L."/>
            <person name="Karanyi Z."/>
            <person name="Kato M."/>
            <person name="Keller N."/>
            <person name="Kelly D.E."/>
            <person name="Kiel J.A."/>
            <person name="Kim J.M."/>
            <person name="van der Klei I.J."/>
            <person name="Klis F.M."/>
            <person name="Kovalchuk A."/>
            <person name="Krasevec N."/>
            <person name="Kubicek C.P."/>
            <person name="Liu B."/>
            <person name="Maccabe A."/>
            <person name="Meyer V."/>
            <person name="Mirabito P."/>
            <person name="Miskei M."/>
            <person name="Mos M."/>
            <person name="Mullins J."/>
            <person name="Nelson D.R."/>
            <person name="Nielsen J."/>
            <person name="Oakley B.R."/>
            <person name="Osmani S.A."/>
            <person name="Pakula T."/>
            <person name="Paszewski A."/>
            <person name="Paulsen I."/>
            <person name="Pilsyk S."/>
            <person name="Pocsi I."/>
            <person name="Punt P.J."/>
            <person name="Ram A.F."/>
            <person name="Ren Q."/>
            <person name="Robellet X."/>
            <person name="Robson G."/>
            <person name="Seiboth B."/>
            <person name="van Solingen P."/>
            <person name="Specht T."/>
            <person name="Sun J."/>
            <person name="Taheri-Talesh N."/>
            <person name="Takeshita N."/>
            <person name="Ussery D."/>
            <person name="vanKuyk P.A."/>
            <person name="Visser H."/>
            <person name="van de Vondervoort P.J."/>
            <person name="de Vries R.P."/>
            <person name="Walton J."/>
            <person name="Xiang X."/>
            <person name="Xiong Y."/>
            <person name="Zeng A.P."/>
            <person name="Brandt B.W."/>
            <person name="Cornell M.J."/>
            <person name="van den Hondel C.A."/>
            <person name="Visser J."/>
            <person name="Oliver S.G."/>
            <person name="Turner G."/>
        </authorList>
    </citation>
    <scope>GENOME REANNOTATION</scope>
    <source>
        <strain>FGSC A4 / ATCC 38163 / CBS 112.46 / NRRL 194 / M139</strain>
    </source>
</reference>
<protein>
    <recommendedName>
        <fullName evidence="1">NADPH--cytochrome P450 reductase</fullName>
        <shortName evidence="1">CPR</shortName>
        <shortName evidence="1">P450R</shortName>
        <ecNumber evidence="1">1.6.2.4</ecNumber>
    </recommendedName>
</protein>
<keyword id="KW-1003">Cell membrane</keyword>
<keyword id="KW-0256">Endoplasmic reticulum</keyword>
<keyword id="KW-0274">FAD</keyword>
<keyword id="KW-0285">Flavoprotein</keyword>
<keyword id="KW-0288">FMN</keyword>
<keyword id="KW-0444">Lipid biosynthesis</keyword>
<keyword id="KW-0443">Lipid metabolism</keyword>
<keyword id="KW-0472">Membrane</keyword>
<keyword id="KW-0496">Mitochondrion</keyword>
<keyword id="KW-1000">Mitochondrion outer membrane</keyword>
<keyword id="KW-0521">NADP</keyword>
<keyword id="KW-0560">Oxidoreductase</keyword>
<keyword id="KW-1185">Reference proteome</keyword>
<keyword id="KW-0752">Steroid biosynthesis</keyword>
<keyword id="KW-0753">Steroid metabolism</keyword>
<keyword id="KW-0756">Sterol biosynthesis</keyword>
<keyword id="KW-1207">Sterol metabolism</keyword>
<keyword id="KW-0812">Transmembrane</keyword>
<keyword id="KW-1133">Transmembrane helix</keyword>
<gene>
    <name evidence="1" type="primary">cprA</name>
    <name type="ORF">AN0595</name>
</gene>
<sequence>MAQLDTLDVVVLAVLLAGSIAYFTKGTFWAVAKDPYASSGPAMNGVAKAGKSRNIIEKMDETGKNCVIFYGSQTGTAEDYASRLAKEGSQRFGLKTMVADIEEYDYENLDQFPEDKVAFFVLATYGEGEPTDNAVEFYQFITGDDVSFEGGGSAEDKPLSSLKYVAFGLGNNTYEHYNAMVRQVDAALTKLGAQRIGSAGEGDDGAGTMEEDFLAWKEPMWAALSEAMNLQEREASYEPVFCVTEDESLTPEDNSVYLGEPTKGHLEGQPNGPYSAHNPYIAPIVESRELFTVKDRNCLHMEISIAGTNLTYQTGDHIAIWPTNAGAEVDRFLNVFGLEEKRHSVINIKGIDVTAKVPIPTPTTYDAAVRYYMEVCAPVSRQFVSTLAAFAPDEETKTEIVRLGSDKDYFHEKITNQCFNIAQALQSITSKPFSNVPFSLLIEGLNKIQPRYYSISSSSLVQKDKISITAVVESTRLPGATHIVKGVTTNYLLALKQKQNGDPSPDPHGQTYAINGPRNKYDGIHVPVHVRHSNFKLPSDPSRPIIMIGPGTGVAPFRGFIQERAALAARGEKVGPTVLFFGCRKRDEDFLYKDEWKVFQDQLGDSLKIITAFSRESEKKVYVQHRLKEHAELVSDLLKQKATFYVCGDAANMAREVNLVLGQIIAAQRGLPAEKGEEMVKHMRSSGSYQEDVWS</sequence>
<proteinExistence type="inferred from homology"/>
<accession>Q5BFT5</accession>
<accession>C8VSB1</accession>
<evidence type="ECO:0000255" key="1">
    <source>
        <dbReference type="HAMAP-Rule" id="MF_03212"/>
    </source>
</evidence>
<evidence type="ECO:0000256" key="2">
    <source>
        <dbReference type="SAM" id="MobiDB-lite"/>
    </source>
</evidence>
<evidence type="ECO:0000312" key="3">
    <source>
        <dbReference type="EMBL" id="EAA66694.1"/>
    </source>
</evidence>
<comment type="function">
    <text evidence="1">This enzyme is required for electron transfer from NADP to cytochrome P450 in microsomes. It can also provide electron transfer to heme oxygenase and cytochrome B5. Involved in ergosterol biosynthesis.</text>
</comment>
<comment type="catalytic activity">
    <reaction evidence="1">
        <text>2 oxidized [cytochrome P450] + NADPH = 2 reduced [cytochrome P450] + NADP(+) + H(+)</text>
        <dbReference type="Rhea" id="RHEA:24040"/>
        <dbReference type="Rhea" id="RHEA-COMP:14627"/>
        <dbReference type="Rhea" id="RHEA-COMP:14628"/>
        <dbReference type="ChEBI" id="CHEBI:15378"/>
        <dbReference type="ChEBI" id="CHEBI:55376"/>
        <dbReference type="ChEBI" id="CHEBI:57783"/>
        <dbReference type="ChEBI" id="CHEBI:58349"/>
        <dbReference type="ChEBI" id="CHEBI:60344"/>
        <dbReference type="EC" id="1.6.2.4"/>
    </reaction>
</comment>
<comment type="cofactor">
    <cofactor evidence="1">
        <name>FAD</name>
        <dbReference type="ChEBI" id="CHEBI:57692"/>
    </cofactor>
    <text evidence="1">Binds 1 FAD per monomer.</text>
</comment>
<comment type="cofactor">
    <cofactor evidence="1">
        <name>FMN</name>
        <dbReference type="ChEBI" id="CHEBI:58210"/>
    </cofactor>
    <text evidence="1">Binds 1 FMN per monomer.</text>
</comment>
<comment type="subcellular location">
    <subcellularLocation>
        <location evidence="1">Endoplasmic reticulum membrane</location>
        <topology evidence="1">Single-pass membrane protein</topology>
        <orientation evidence="1">Cytoplasmic side</orientation>
    </subcellularLocation>
    <subcellularLocation>
        <location evidence="1">Mitochondrion outer membrane</location>
        <topology evidence="1">Single-pass membrane protein</topology>
        <orientation evidence="1">Cytoplasmic side</orientation>
    </subcellularLocation>
    <subcellularLocation>
        <location evidence="1">Cell membrane</location>
        <topology evidence="1">Single-pass membrane protein</topology>
        <orientation evidence="1">Cytoplasmic side</orientation>
    </subcellularLocation>
</comment>
<comment type="similarity">
    <text evidence="1">Belongs to the NADPH--cytochrome P450 reductase family.</text>
</comment>
<comment type="similarity">
    <text evidence="1">In the N-terminal section; belongs to the flavodoxin family.</text>
</comment>
<comment type="similarity">
    <text evidence="1">In the C-terminal section; belongs to the flavoprotein pyridine nucleotide cytochrome reductase family.</text>
</comment>
<name>NCPR_EMENI</name>
<dbReference type="EC" id="1.6.2.4" evidence="1"/>
<dbReference type="EMBL" id="AACD01000007">
    <property type="protein sequence ID" value="EAA66694.1"/>
    <property type="molecule type" value="Genomic_DNA"/>
</dbReference>
<dbReference type="EMBL" id="BN001308">
    <property type="protein sequence ID" value="CBF89160.1"/>
    <property type="molecule type" value="Genomic_DNA"/>
</dbReference>
<dbReference type="RefSeq" id="XP_658199.1">
    <property type="nucleotide sequence ID" value="XM_653107.1"/>
</dbReference>
<dbReference type="SMR" id="Q5BFT5"/>
<dbReference type="FunCoup" id="Q5BFT5">
    <property type="interactions" value="823"/>
</dbReference>
<dbReference type="STRING" id="227321.Q5BFT5"/>
<dbReference type="EnsemblFungi" id="CBF89160">
    <property type="protein sequence ID" value="CBF89160"/>
    <property type="gene ID" value="ANIA_00595"/>
</dbReference>
<dbReference type="KEGG" id="ani:ANIA_00595"/>
<dbReference type="VEuPathDB" id="FungiDB:AN0595"/>
<dbReference type="eggNOG" id="KOG1158">
    <property type="taxonomic scope" value="Eukaryota"/>
</dbReference>
<dbReference type="HOGENOM" id="CLU_001570_17_3_1"/>
<dbReference type="InParanoid" id="Q5BFT5"/>
<dbReference type="OMA" id="QKRYQRD"/>
<dbReference type="OrthoDB" id="1856718at2759"/>
<dbReference type="Proteomes" id="UP000000560">
    <property type="component" value="Chromosome VIII"/>
</dbReference>
<dbReference type="GO" id="GO:0005829">
    <property type="term" value="C:cytosol"/>
    <property type="evidence" value="ECO:0000318"/>
    <property type="project" value="GO_Central"/>
</dbReference>
<dbReference type="GO" id="GO:0005789">
    <property type="term" value="C:endoplasmic reticulum membrane"/>
    <property type="evidence" value="ECO:0007669"/>
    <property type="project" value="UniProtKB-SubCell"/>
</dbReference>
<dbReference type="GO" id="GO:0005741">
    <property type="term" value="C:mitochondrial outer membrane"/>
    <property type="evidence" value="ECO:0007669"/>
    <property type="project" value="UniProtKB-SubCell"/>
</dbReference>
<dbReference type="GO" id="GO:0005886">
    <property type="term" value="C:plasma membrane"/>
    <property type="evidence" value="ECO:0007669"/>
    <property type="project" value="UniProtKB-SubCell"/>
</dbReference>
<dbReference type="GO" id="GO:0050660">
    <property type="term" value="F:flavin adenine dinucleotide binding"/>
    <property type="evidence" value="ECO:0000318"/>
    <property type="project" value="GO_Central"/>
</dbReference>
<dbReference type="GO" id="GO:0010181">
    <property type="term" value="F:FMN binding"/>
    <property type="evidence" value="ECO:0000318"/>
    <property type="project" value="GO_Central"/>
</dbReference>
<dbReference type="GO" id="GO:0050661">
    <property type="term" value="F:NADP binding"/>
    <property type="evidence" value="ECO:0007669"/>
    <property type="project" value="UniProtKB-UniRule"/>
</dbReference>
<dbReference type="GO" id="GO:0003958">
    <property type="term" value="F:NADPH-hemoprotein reductase activity"/>
    <property type="evidence" value="ECO:0000318"/>
    <property type="project" value="GO_Central"/>
</dbReference>
<dbReference type="GO" id="GO:0006696">
    <property type="term" value="P:ergosterol biosynthetic process"/>
    <property type="evidence" value="ECO:0007669"/>
    <property type="project" value="UniProtKB-UniRule"/>
</dbReference>
<dbReference type="CDD" id="cd06204">
    <property type="entry name" value="CYPOR"/>
    <property type="match status" value="1"/>
</dbReference>
<dbReference type="FunFam" id="1.20.990.10:FF:000009">
    <property type="entry name" value="NADPH--cytochrome P450 reductase"/>
    <property type="match status" value="1"/>
</dbReference>
<dbReference type="FunFam" id="2.40.30.10:FF:000100">
    <property type="entry name" value="NADPH--cytochrome P450 reductase"/>
    <property type="match status" value="1"/>
</dbReference>
<dbReference type="FunFam" id="2.40.30.10:FF:000111">
    <property type="entry name" value="NADPH--cytochrome P450 reductase"/>
    <property type="match status" value="1"/>
</dbReference>
<dbReference type="FunFam" id="3.40.50.360:FF:000024">
    <property type="entry name" value="NADPH--cytochrome P450 reductase"/>
    <property type="match status" value="1"/>
</dbReference>
<dbReference type="FunFam" id="3.40.50.80:FF:000018">
    <property type="entry name" value="NADPH--cytochrome P450 reductase"/>
    <property type="match status" value="1"/>
</dbReference>
<dbReference type="Gene3D" id="3.40.50.360">
    <property type="match status" value="1"/>
</dbReference>
<dbReference type="Gene3D" id="1.20.990.10">
    <property type="entry name" value="NADPH-cytochrome p450 Reductase, Chain A, domain 3"/>
    <property type="match status" value="1"/>
</dbReference>
<dbReference type="Gene3D" id="3.40.50.80">
    <property type="entry name" value="Nucleotide-binding domain of ferredoxin-NADP reductase (FNR) module"/>
    <property type="match status" value="1"/>
</dbReference>
<dbReference type="Gene3D" id="2.40.30.10">
    <property type="entry name" value="Translation factors"/>
    <property type="match status" value="2"/>
</dbReference>
<dbReference type="HAMAP" id="MF_03212">
    <property type="entry name" value="NCPR"/>
    <property type="match status" value="1"/>
</dbReference>
<dbReference type="InterPro" id="IPR003097">
    <property type="entry name" value="CysJ-like_FAD-binding"/>
</dbReference>
<dbReference type="InterPro" id="IPR017927">
    <property type="entry name" value="FAD-bd_FR_type"/>
</dbReference>
<dbReference type="InterPro" id="IPR001094">
    <property type="entry name" value="Flavdoxin-like"/>
</dbReference>
<dbReference type="InterPro" id="IPR008254">
    <property type="entry name" value="Flavodoxin/NO_synth"/>
</dbReference>
<dbReference type="InterPro" id="IPR001709">
    <property type="entry name" value="Flavoprot_Pyr_Nucl_cyt_Rdtase"/>
</dbReference>
<dbReference type="InterPro" id="IPR029039">
    <property type="entry name" value="Flavoprotein-like_sf"/>
</dbReference>
<dbReference type="InterPro" id="IPR039261">
    <property type="entry name" value="FNR_nucleotide-bd"/>
</dbReference>
<dbReference type="InterPro" id="IPR023173">
    <property type="entry name" value="NADPH_Cyt_P450_Rdtase_alpha"/>
</dbReference>
<dbReference type="InterPro" id="IPR001433">
    <property type="entry name" value="OxRdtase_FAD/NAD-bd"/>
</dbReference>
<dbReference type="InterPro" id="IPR023208">
    <property type="entry name" value="P450R"/>
</dbReference>
<dbReference type="InterPro" id="IPR017938">
    <property type="entry name" value="Riboflavin_synthase-like_b-brl"/>
</dbReference>
<dbReference type="PANTHER" id="PTHR19384:SF17">
    <property type="entry name" value="NADPH--CYTOCHROME P450 REDUCTASE"/>
    <property type="match status" value="1"/>
</dbReference>
<dbReference type="PANTHER" id="PTHR19384">
    <property type="entry name" value="NITRIC OXIDE SYNTHASE-RELATED"/>
    <property type="match status" value="1"/>
</dbReference>
<dbReference type="Pfam" id="PF00667">
    <property type="entry name" value="FAD_binding_1"/>
    <property type="match status" value="1"/>
</dbReference>
<dbReference type="Pfam" id="PF00258">
    <property type="entry name" value="Flavodoxin_1"/>
    <property type="match status" value="1"/>
</dbReference>
<dbReference type="Pfam" id="PF00175">
    <property type="entry name" value="NAD_binding_1"/>
    <property type="match status" value="1"/>
</dbReference>
<dbReference type="PIRSF" id="PIRSF000208">
    <property type="entry name" value="P450R"/>
    <property type="match status" value="1"/>
</dbReference>
<dbReference type="PRINTS" id="PR00369">
    <property type="entry name" value="FLAVODOXIN"/>
</dbReference>
<dbReference type="PRINTS" id="PR00371">
    <property type="entry name" value="FPNCR"/>
</dbReference>
<dbReference type="SUPFAM" id="SSF52343">
    <property type="entry name" value="Ferredoxin reductase-like, C-terminal NADP-linked domain"/>
    <property type="match status" value="1"/>
</dbReference>
<dbReference type="SUPFAM" id="SSF52218">
    <property type="entry name" value="Flavoproteins"/>
    <property type="match status" value="1"/>
</dbReference>
<dbReference type="SUPFAM" id="SSF63380">
    <property type="entry name" value="Riboflavin synthase domain-like"/>
    <property type="match status" value="1"/>
</dbReference>
<dbReference type="PROSITE" id="PS51384">
    <property type="entry name" value="FAD_FR"/>
    <property type="match status" value="1"/>
</dbReference>
<dbReference type="PROSITE" id="PS50902">
    <property type="entry name" value="FLAVODOXIN_LIKE"/>
    <property type="match status" value="1"/>
</dbReference>
<feature type="chain" id="PRO_0000404332" description="NADPH--cytochrome P450 reductase">
    <location>
        <begin position="1"/>
        <end position="695"/>
    </location>
</feature>
<feature type="topological domain" description="Lumenal" evidence="1">
    <location>
        <begin position="1"/>
        <end position="8"/>
    </location>
</feature>
<feature type="transmembrane region" description="Helical" evidence="1">
    <location>
        <begin position="9"/>
        <end position="31"/>
    </location>
</feature>
<feature type="topological domain" description="Cytoplasmic" evidence="1">
    <location>
        <begin position="32"/>
        <end position="695"/>
    </location>
</feature>
<feature type="domain" description="Flavodoxin-like" evidence="1">
    <location>
        <begin position="66"/>
        <end position="221"/>
    </location>
</feature>
<feature type="domain" description="FAD-binding FR-type" evidence="1">
    <location>
        <begin position="277"/>
        <end position="538"/>
    </location>
</feature>
<feature type="region of interest" description="Disordered" evidence="2">
    <location>
        <begin position="497"/>
        <end position="516"/>
    </location>
</feature>
<feature type="binding site" evidence="1">
    <location>
        <begin position="72"/>
        <end position="77"/>
    </location>
    <ligand>
        <name>FMN</name>
        <dbReference type="ChEBI" id="CHEBI:58210"/>
    </ligand>
</feature>
<feature type="binding site" evidence="1">
    <location>
        <begin position="123"/>
        <end position="126"/>
    </location>
    <ligand>
        <name>FMN</name>
        <dbReference type="ChEBI" id="CHEBI:58210"/>
    </ligand>
</feature>
<feature type="binding site" evidence="1">
    <location>
        <begin position="169"/>
        <end position="178"/>
    </location>
    <ligand>
        <name>FMN</name>
        <dbReference type="ChEBI" id="CHEBI:58210"/>
    </ligand>
</feature>
<feature type="binding site" evidence="1">
    <location>
        <position position="204"/>
    </location>
    <ligand>
        <name>FMN</name>
        <dbReference type="ChEBI" id="CHEBI:58210"/>
    </ligand>
</feature>
<feature type="binding site" evidence="1">
    <location>
        <position position="296"/>
    </location>
    <ligand>
        <name>NADP(+)</name>
        <dbReference type="ChEBI" id="CHEBI:58349"/>
    </ligand>
</feature>
<feature type="binding site" evidence="1">
    <location>
        <begin position="451"/>
        <end position="454"/>
    </location>
    <ligand>
        <name>FAD</name>
        <dbReference type="ChEBI" id="CHEBI:57692"/>
    </ligand>
</feature>
<feature type="binding site" evidence="1">
    <location>
        <begin position="469"/>
        <end position="471"/>
    </location>
    <ligand>
        <name>FAD</name>
        <dbReference type="ChEBI" id="CHEBI:57692"/>
    </ligand>
</feature>
<feature type="binding site" evidence="1">
    <location>
        <begin position="486"/>
        <end position="489"/>
    </location>
    <ligand>
        <name>FAD</name>
        <dbReference type="ChEBI" id="CHEBI:57692"/>
    </ligand>
</feature>
<feature type="binding site" evidence="1">
    <location>
        <position position="552"/>
    </location>
    <ligand>
        <name>NADP(+)</name>
        <dbReference type="ChEBI" id="CHEBI:58349"/>
    </ligand>
</feature>
<feature type="binding site" evidence="1">
    <location>
        <begin position="614"/>
        <end position="615"/>
    </location>
    <ligand>
        <name>NADP(+)</name>
        <dbReference type="ChEBI" id="CHEBI:58349"/>
    </ligand>
</feature>
<feature type="binding site" evidence="1">
    <location>
        <begin position="620"/>
        <end position="624"/>
    </location>
    <ligand>
        <name>NADP(+)</name>
        <dbReference type="ChEBI" id="CHEBI:58349"/>
    </ligand>
</feature>
<feature type="binding site" evidence="1">
    <location>
        <position position="656"/>
    </location>
    <ligand>
        <name>NADP(+)</name>
        <dbReference type="ChEBI" id="CHEBI:58349"/>
    </ligand>
</feature>
<feature type="binding site" evidence="1">
    <location>
        <position position="694"/>
    </location>
    <ligand>
        <name>FAD</name>
        <dbReference type="ChEBI" id="CHEBI:57692"/>
    </ligand>
</feature>
<organism>
    <name type="scientific">Emericella nidulans (strain FGSC A4 / ATCC 38163 / CBS 112.46 / NRRL 194 / M139)</name>
    <name type="common">Aspergillus nidulans</name>
    <dbReference type="NCBI Taxonomy" id="227321"/>
    <lineage>
        <taxon>Eukaryota</taxon>
        <taxon>Fungi</taxon>
        <taxon>Dikarya</taxon>
        <taxon>Ascomycota</taxon>
        <taxon>Pezizomycotina</taxon>
        <taxon>Eurotiomycetes</taxon>
        <taxon>Eurotiomycetidae</taxon>
        <taxon>Eurotiales</taxon>
        <taxon>Aspergillaceae</taxon>
        <taxon>Aspergillus</taxon>
        <taxon>Aspergillus subgen. Nidulantes</taxon>
    </lineage>
</organism>